<sequence length="202" mass="21386">MIGRLSGTLLEKHPPQILVDAGGVGYEVDVPMSTFCRLPGLNEPVVLWTHMAVREDAHLLFGFAGRAERELFRQLIRISGVGGKLALALLSSLEPDELARAVAQEDIKTLSRVPGIGKKTAERLILELRGKLGSLPSADLLSPAPAAGAALLVENDERADISQALQALGYSAREAEAALKSVPDGTDVATGIRLALKALARP</sequence>
<proteinExistence type="inferred from homology"/>
<keyword id="KW-0963">Cytoplasm</keyword>
<keyword id="KW-0227">DNA damage</keyword>
<keyword id="KW-0233">DNA recombination</keyword>
<keyword id="KW-0234">DNA repair</keyword>
<keyword id="KW-0238">DNA-binding</keyword>
<keyword id="KW-1185">Reference proteome</keyword>
<feature type="chain" id="PRO_1000195150" description="Holliday junction branch migration complex subunit RuvA">
    <location>
        <begin position="1"/>
        <end position="202"/>
    </location>
</feature>
<feature type="region of interest" description="Domain I" evidence="1">
    <location>
        <begin position="1"/>
        <end position="64"/>
    </location>
</feature>
<feature type="region of interest" description="Domain II" evidence="1">
    <location>
        <begin position="65"/>
        <end position="143"/>
    </location>
</feature>
<feature type="region of interest" description="Flexible linker" evidence="1">
    <location>
        <begin position="144"/>
        <end position="152"/>
    </location>
</feature>
<feature type="region of interest" description="Domain III" evidence="1">
    <location>
        <begin position="153"/>
        <end position="202"/>
    </location>
</feature>
<dbReference type="EMBL" id="CP001154">
    <property type="protein sequence ID" value="ACO76089.1"/>
    <property type="molecule type" value="Genomic_DNA"/>
</dbReference>
<dbReference type="RefSeq" id="WP_012698552.1">
    <property type="nucleotide sequence ID" value="NC_012559.1"/>
</dbReference>
<dbReference type="SMR" id="C1D5S2"/>
<dbReference type="STRING" id="557598.LHK_03111"/>
<dbReference type="GeneID" id="75108312"/>
<dbReference type="KEGG" id="lhk:LHK_03111"/>
<dbReference type="eggNOG" id="COG0632">
    <property type="taxonomic scope" value="Bacteria"/>
</dbReference>
<dbReference type="HOGENOM" id="CLU_087936_0_0_4"/>
<dbReference type="Proteomes" id="UP000002010">
    <property type="component" value="Chromosome"/>
</dbReference>
<dbReference type="GO" id="GO:0005737">
    <property type="term" value="C:cytoplasm"/>
    <property type="evidence" value="ECO:0007669"/>
    <property type="project" value="UniProtKB-SubCell"/>
</dbReference>
<dbReference type="GO" id="GO:0009379">
    <property type="term" value="C:Holliday junction helicase complex"/>
    <property type="evidence" value="ECO:0007669"/>
    <property type="project" value="InterPro"/>
</dbReference>
<dbReference type="GO" id="GO:0048476">
    <property type="term" value="C:Holliday junction resolvase complex"/>
    <property type="evidence" value="ECO:0007669"/>
    <property type="project" value="UniProtKB-UniRule"/>
</dbReference>
<dbReference type="GO" id="GO:0005524">
    <property type="term" value="F:ATP binding"/>
    <property type="evidence" value="ECO:0007669"/>
    <property type="project" value="InterPro"/>
</dbReference>
<dbReference type="GO" id="GO:0000400">
    <property type="term" value="F:four-way junction DNA binding"/>
    <property type="evidence" value="ECO:0007669"/>
    <property type="project" value="UniProtKB-UniRule"/>
</dbReference>
<dbReference type="GO" id="GO:0009378">
    <property type="term" value="F:four-way junction helicase activity"/>
    <property type="evidence" value="ECO:0007669"/>
    <property type="project" value="InterPro"/>
</dbReference>
<dbReference type="GO" id="GO:0006310">
    <property type="term" value="P:DNA recombination"/>
    <property type="evidence" value="ECO:0007669"/>
    <property type="project" value="UniProtKB-UniRule"/>
</dbReference>
<dbReference type="GO" id="GO:0006281">
    <property type="term" value="P:DNA repair"/>
    <property type="evidence" value="ECO:0007669"/>
    <property type="project" value="UniProtKB-UniRule"/>
</dbReference>
<dbReference type="CDD" id="cd00080">
    <property type="entry name" value="H3TH_StructSpec-5'-nucleases"/>
    <property type="match status" value="1"/>
</dbReference>
<dbReference type="CDD" id="cd14332">
    <property type="entry name" value="UBA_RuvA_C"/>
    <property type="match status" value="1"/>
</dbReference>
<dbReference type="Gene3D" id="1.10.150.20">
    <property type="entry name" value="5' to 3' exonuclease, C-terminal subdomain"/>
    <property type="match status" value="1"/>
</dbReference>
<dbReference type="Gene3D" id="1.10.8.10">
    <property type="entry name" value="DNA helicase RuvA subunit, C-terminal domain"/>
    <property type="match status" value="1"/>
</dbReference>
<dbReference type="Gene3D" id="2.40.50.140">
    <property type="entry name" value="Nucleic acid-binding proteins"/>
    <property type="match status" value="1"/>
</dbReference>
<dbReference type="HAMAP" id="MF_00031">
    <property type="entry name" value="DNA_HJ_migration_RuvA"/>
    <property type="match status" value="1"/>
</dbReference>
<dbReference type="InterPro" id="IPR013849">
    <property type="entry name" value="DNA_helicase_Holl-junc_RuvA_I"/>
</dbReference>
<dbReference type="InterPro" id="IPR003583">
    <property type="entry name" value="Hlx-hairpin-Hlx_DNA-bd_motif"/>
</dbReference>
<dbReference type="InterPro" id="IPR012340">
    <property type="entry name" value="NA-bd_OB-fold"/>
</dbReference>
<dbReference type="InterPro" id="IPR000085">
    <property type="entry name" value="RuvA"/>
</dbReference>
<dbReference type="InterPro" id="IPR010994">
    <property type="entry name" value="RuvA_2-like"/>
</dbReference>
<dbReference type="InterPro" id="IPR011114">
    <property type="entry name" value="RuvA_C"/>
</dbReference>
<dbReference type="InterPro" id="IPR036267">
    <property type="entry name" value="RuvA_C_sf"/>
</dbReference>
<dbReference type="NCBIfam" id="TIGR00084">
    <property type="entry name" value="ruvA"/>
    <property type="match status" value="1"/>
</dbReference>
<dbReference type="Pfam" id="PF14520">
    <property type="entry name" value="HHH_5"/>
    <property type="match status" value="1"/>
</dbReference>
<dbReference type="Pfam" id="PF07499">
    <property type="entry name" value="RuvA_C"/>
    <property type="match status" value="1"/>
</dbReference>
<dbReference type="Pfam" id="PF01330">
    <property type="entry name" value="RuvA_N"/>
    <property type="match status" value="1"/>
</dbReference>
<dbReference type="SMART" id="SM00278">
    <property type="entry name" value="HhH1"/>
    <property type="match status" value="2"/>
</dbReference>
<dbReference type="SUPFAM" id="SSF46929">
    <property type="entry name" value="DNA helicase RuvA subunit, C-terminal domain"/>
    <property type="match status" value="1"/>
</dbReference>
<dbReference type="SUPFAM" id="SSF50249">
    <property type="entry name" value="Nucleic acid-binding proteins"/>
    <property type="match status" value="1"/>
</dbReference>
<dbReference type="SUPFAM" id="SSF47781">
    <property type="entry name" value="RuvA domain 2-like"/>
    <property type="match status" value="1"/>
</dbReference>
<protein>
    <recommendedName>
        <fullName evidence="1">Holliday junction branch migration complex subunit RuvA</fullName>
    </recommendedName>
</protein>
<gene>
    <name evidence="1" type="primary">ruvA</name>
    <name type="ordered locus">LHK_03111</name>
</gene>
<comment type="function">
    <text evidence="1">The RuvA-RuvB-RuvC complex processes Holliday junction (HJ) DNA during genetic recombination and DNA repair, while the RuvA-RuvB complex plays an important role in the rescue of blocked DNA replication forks via replication fork reversal (RFR). RuvA specifically binds to HJ cruciform DNA, conferring on it an open structure. The RuvB hexamer acts as an ATP-dependent pump, pulling dsDNA into and through the RuvAB complex. HJ branch migration allows RuvC to scan DNA until it finds its consensus sequence, where it cleaves and resolves the cruciform DNA.</text>
</comment>
<comment type="subunit">
    <text evidence="1">Homotetramer. Forms an RuvA(8)-RuvB(12)-Holliday junction (HJ) complex. HJ DNA is sandwiched between 2 RuvA tetramers; dsDNA enters through RuvA and exits via RuvB. An RuvB hexamer assembles on each DNA strand where it exits the tetramer. Each RuvB hexamer is contacted by two RuvA subunits (via domain III) on 2 adjacent RuvB subunits; this complex drives branch migration. In the full resolvosome a probable DNA-RuvA(4)-RuvB(12)-RuvC(2) complex forms which resolves the HJ.</text>
</comment>
<comment type="subcellular location">
    <subcellularLocation>
        <location evidence="1">Cytoplasm</location>
    </subcellularLocation>
</comment>
<comment type="domain">
    <text evidence="1">Has three domains with a flexible linker between the domains II and III and assumes an 'L' shape. Domain III is highly mobile and contacts RuvB.</text>
</comment>
<comment type="similarity">
    <text evidence="1">Belongs to the RuvA family.</text>
</comment>
<accession>C1D5S2</accession>
<evidence type="ECO:0000255" key="1">
    <source>
        <dbReference type="HAMAP-Rule" id="MF_00031"/>
    </source>
</evidence>
<organism>
    <name type="scientific">Laribacter hongkongensis (strain HLHK9)</name>
    <dbReference type="NCBI Taxonomy" id="557598"/>
    <lineage>
        <taxon>Bacteria</taxon>
        <taxon>Pseudomonadati</taxon>
        <taxon>Pseudomonadota</taxon>
        <taxon>Betaproteobacteria</taxon>
        <taxon>Neisseriales</taxon>
        <taxon>Aquaspirillaceae</taxon>
        <taxon>Laribacter</taxon>
    </lineage>
</organism>
<name>RUVA_LARHH</name>
<reference key="1">
    <citation type="journal article" date="2009" name="PLoS Genet.">
        <title>The complete genome and proteome of Laribacter hongkongensis reveal potential mechanisms for adaptations to different temperatures and habitats.</title>
        <authorList>
            <person name="Woo P.C.Y."/>
            <person name="Lau S.K.P."/>
            <person name="Tse H."/>
            <person name="Teng J.L.L."/>
            <person name="Curreem S.O."/>
            <person name="Tsang A.K.L."/>
            <person name="Fan R.Y.Y."/>
            <person name="Wong G.K.M."/>
            <person name="Huang Y."/>
            <person name="Loman N.J."/>
            <person name="Snyder L.A.S."/>
            <person name="Cai J.J."/>
            <person name="Huang J.-D."/>
            <person name="Mak W."/>
            <person name="Pallen M.J."/>
            <person name="Lok S."/>
            <person name="Yuen K.-Y."/>
        </authorList>
    </citation>
    <scope>NUCLEOTIDE SEQUENCE [LARGE SCALE GENOMIC DNA]</scope>
    <source>
        <strain>HLHK9</strain>
    </source>
</reference>